<keyword id="KW-0001">2Fe-2S</keyword>
<keyword id="KW-0058">Aromatic hydrocarbons catabolism</keyword>
<keyword id="KW-0249">Electron transport</keyword>
<keyword id="KW-0408">Iron</keyword>
<keyword id="KW-0411">Iron-sulfur</keyword>
<keyword id="KW-0479">Metal-binding</keyword>
<keyword id="KW-0813">Transport</keyword>
<sequence>MTEKWIDAVALYEIPEGDVLGVTVEGKELALYEVEGEIYATDNLCTHGAARMSDGFLEGREIECPLHQGRFDVCTGRALCAPVTQNIKTYPVKIEGQRVMIDLS</sequence>
<evidence type="ECO:0000250" key="1">
    <source>
        <dbReference type="UniProtKB" id="P0A185"/>
    </source>
</evidence>
<evidence type="ECO:0000255" key="2">
    <source>
        <dbReference type="PROSITE-ProRule" id="PRU00628"/>
    </source>
</evidence>
<evidence type="ECO:0000305" key="3"/>
<reference key="1">
    <citation type="submission" date="1996-04" db="EMBL/GenBank/DDBJ databases">
        <title>The molecular analysis of an NAH7-type gene cluster, pah, located on the chromosome of Pseudomonas aeruginosa PaK1.</title>
        <authorList>
            <person name="Takizawa N."/>
            <person name="Iida T."/>
            <person name="Yamauchi K."/>
            <person name="Satoh S."/>
            <person name="Wang Y."/>
            <person name="Fukuda M."/>
            <person name="Kiyohara H."/>
        </authorList>
    </citation>
    <scope>NUCLEOTIDE SEQUENCE [GENOMIC DNA]</scope>
    <source>
        <strain>PaK1</strain>
    </source>
</reference>
<proteinExistence type="inferred from homology"/>
<comment type="function">
    <text evidence="1">Component of the naphthalene dioxygenase (NDO) multicomponent enzyme system which catalyzes the incorporation of both atoms of molecular oxygen into naphthalene to form cis-(1R,2S)-dihydroxy-1,2-dihydronaphthalene. Functions as an intermediate electron transfer protein via a specific interaction with iron sulfur protein components (ISP) (NdoB and NdoC).</text>
</comment>
<comment type="cofactor">
    <cofactor evidence="1 2">
        <name>[2Fe-2S] cluster</name>
        <dbReference type="ChEBI" id="CHEBI:190135"/>
    </cofactor>
    <text evidence="1 2">Binds 1 [2Fe-2S] cluster per subunit.</text>
</comment>
<comment type="pathway">
    <text evidence="1">Aromatic compound metabolism; naphthalene degradation.</text>
</comment>
<comment type="subunit">
    <text evidence="1">The naphthalene dioxygenase (NDO) multicomponent enzyme system is composed of an electron transfer component and a dioxygenase component (iron sulfur protein (ISP)). The electron transfer component is composed of a ferredoxin reductase (NdoR) and a ferredoxin (NdoA), and the dioxygenase component is formed of a heterohexamer (trimer of heterodimers) of three large alpha subunits (NdoB) and three small beta subunits (NdoC).</text>
</comment>
<comment type="similarity">
    <text evidence="3">Belongs to the bacterial ring-hydroxylating dioxygenase ferredoxin component family.</text>
</comment>
<gene>
    <name evidence="1" type="primary">ndoA</name>
    <name type="synonym">pahA2</name>
</gene>
<organism>
    <name type="scientific">Pseudomonas aeruginosa</name>
    <dbReference type="NCBI Taxonomy" id="287"/>
    <lineage>
        <taxon>Bacteria</taxon>
        <taxon>Pseudomonadati</taxon>
        <taxon>Pseudomonadota</taxon>
        <taxon>Gammaproteobacteria</taxon>
        <taxon>Pseudomonadales</taxon>
        <taxon>Pseudomonadaceae</taxon>
        <taxon>Pseudomonas</taxon>
    </lineage>
</organism>
<protein>
    <recommendedName>
        <fullName evidence="1">Naphthalene 1,2-dioxygenase system, ferredoxin component</fullName>
    </recommendedName>
</protein>
<accession>Q51493</accession>
<feature type="initiator methionine" description="Removed" evidence="1">
    <location>
        <position position="1"/>
    </location>
</feature>
<feature type="chain" id="PRO_0000201691" description="Naphthalene 1,2-dioxygenase system, ferredoxin component">
    <location>
        <begin position="2"/>
        <end position="104"/>
    </location>
</feature>
<feature type="domain" description="Rieske" evidence="2">
    <location>
        <begin position="6"/>
        <end position="101"/>
    </location>
</feature>
<feature type="binding site" evidence="1 2">
    <location>
        <position position="45"/>
    </location>
    <ligand>
        <name>[2Fe-2S] cluster</name>
        <dbReference type="ChEBI" id="CHEBI:190135"/>
    </ligand>
</feature>
<feature type="binding site" evidence="1 2">
    <location>
        <position position="47"/>
    </location>
    <ligand>
        <name>[2Fe-2S] cluster</name>
        <dbReference type="ChEBI" id="CHEBI:190135"/>
    </ligand>
</feature>
<feature type="binding site" evidence="1 2">
    <location>
        <position position="64"/>
    </location>
    <ligand>
        <name>[2Fe-2S] cluster</name>
        <dbReference type="ChEBI" id="CHEBI:190135"/>
    </ligand>
</feature>
<feature type="binding site" evidence="1 2">
    <location>
        <position position="67"/>
    </location>
    <ligand>
        <name>[2Fe-2S] cluster</name>
        <dbReference type="ChEBI" id="CHEBI:190135"/>
    </ligand>
</feature>
<name>NDOA_PSEAI</name>
<dbReference type="EMBL" id="D84146">
    <property type="protein sequence ID" value="BAA12239.1"/>
    <property type="molecule type" value="Genomic_DNA"/>
</dbReference>
<dbReference type="RefSeq" id="WP_009399901.1">
    <property type="nucleotide sequence ID" value="NZ_JBANEC010000016.1"/>
</dbReference>
<dbReference type="SMR" id="Q51493"/>
<dbReference type="GeneID" id="77261130"/>
<dbReference type="UniPathway" id="UPA00082"/>
<dbReference type="GO" id="GO:0051537">
    <property type="term" value="F:2 iron, 2 sulfur cluster binding"/>
    <property type="evidence" value="ECO:0000250"/>
    <property type="project" value="UniProtKB"/>
</dbReference>
<dbReference type="GO" id="GO:0046872">
    <property type="term" value="F:metal ion binding"/>
    <property type="evidence" value="ECO:0007669"/>
    <property type="project" value="UniProtKB-KW"/>
</dbReference>
<dbReference type="GO" id="GO:0009056">
    <property type="term" value="P:catabolic process"/>
    <property type="evidence" value="ECO:0007669"/>
    <property type="project" value="UniProtKB-KW"/>
</dbReference>
<dbReference type="CDD" id="cd03528">
    <property type="entry name" value="Rieske_RO_ferredoxin"/>
    <property type="match status" value="1"/>
</dbReference>
<dbReference type="FunFam" id="2.102.10.10:FF:000015">
    <property type="entry name" value="Naphthalene 1,2-dioxygenase ferredoxin component"/>
    <property type="match status" value="1"/>
</dbReference>
<dbReference type="Gene3D" id="2.102.10.10">
    <property type="entry name" value="Rieske [2Fe-2S] iron-sulphur domain"/>
    <property type="match status" value="1"/>
</dbReference>
<dbReference type="InterPro" id="IPR017941">
    <property type="entry name" value="Rieske_2Fe-2S"/>
</dbReference>
<dbReference type="InterPro" id="IPR036922">
    <property type="entry name" value="Rieske_2Fe-2S_sf"/>
</dbReference>
<dbReference type="PANTHER" id="PTHR21496:SF23">
    <property type="entry name" value="3-PHENYLPROPIONATE_CINNAMIC ACID DIOXYGENASE FERREDOXIN SUBUNIT"/>
    <property type="match status" value="1"/>
</dbReference>
<dbReference type="PANTHER" id="PTHR21496">
    <property type="entry name" value="FERREDOXIN-RELATED"/>
    <property type="match status" value="1"/>
</dbReference>
<dbReference type="Pfam" id="PF00355">
    <property type="entry name" value="Rieske"/>
    <property type="match status" value="1"/>
</dbReference>
<dbReference type="SUPFAM" id="SSF50022">
    <property type="entry name" value="ISP domain"/>
    <property type="match status" value="1"/>
</dbReference>
<dbReference type="PROSITE" id="PS51296">
    <property type="entry name" value="RIESKE"/>
    <property type="match status" value="1"/>
</dbReference>